<dbReference type="EC" id="1.5.1.5" evidence="1"/>
<dbReference type="EC" id="3.5.4.9" evidence="1"/>
<dbReference type="EMBL" id="CP000552">
    <property type="protein sequence ID" value="ABM72366.1"/>
    <property type="molecule type" value="Genomic_DNA"/>
</dbReference>
<dbReference type="RefSeq" id="WP_011820466.1">
    <property type="nucleotide sequence ID" value="NC_008817.1"/>
</dbReference>
<dbReference type="SMR" id="A2BX55"/>
<dbReference type="STRING" id="167542.P9515_11591"/>
<dbReference type="GeneID" id="60200646"/>
<dbReference type="KEGG" id="pmc:P9515_11591"/>
<dbReference type="eggNOG" id="COG0190">
    <property type="taxonomic scope" value="Bacteria"/>
</dbReference>
<dbReference type="HOGENOM" id="CLU_034045_2_1_3"/>
<dbReference type="OrthoDB" id="9803580at2"/>
<dbReference type="UniPathway" id="UPA00193"/>
<dbReference type="Proteomes" id="UP000001589">
    <property type="component" value="Chromosome"/>
</dbReference>
<dbReference type="GO" id="GO:0005829">
    <property type="term" value="C:cytosol"/>
    <property type="evidence" value="ECO:0007669"/>
    <property type="project" value="TreeGrafter"/>
</dbReference>
<dbReference type="GO" id="GO:0004477">
    <property type="term" value="F:methenyltetrahydrofolate cyclohydrolase activity"/>
    <property type="evidence" value="ECO:0007669"/>
    <property type="project" value="UniProtKB-UniRule"/>
</dbReference>
<dbReference type="GO" id="GO:0004488">
    <property type="term" value="F:methylenetetrahydrofolate dehydrogenase (NADP+) activity"/>
    <property type="evidence" value="ECO:0007669"/>
    <property type="project" value="UniProtKB-UniRule"/>
</dbReference>
<dbReference type="GO" id="GO:0000105">
    <property type="term" value="P:L-histidine biosynthetic process"/>
    <property type="evidence" value="ECO:0007669"/>
    <property type="project" value="UniProtKB-KW"/>
</dbReference>
<dbReference type="GO" id="GO:0009086">
    <property type="term" value="P:methionine biosynthetic process"/>
    <property type="evidence" value="ECO:0007669"/>
    <property type="project" value="UniProtKB-KW"/>
</dbReference>
<dbReference type="GO" id="GO:0006164">
    <property type="term" value="P:purine nucleotide biosynthetic process"/>
    <property type="evidence" value="ECO:0007669"/>
    <property type="project" value="UniProtKB-KW"/>
</dbReference>
<dbReference type="GO" id="GO:0035999">
    <property type="term" value="P:tetrahydrofolate interconversion"/>
    <property type="evidence" value="ECO:0007669"/>
    <property type="project" value="UniProtKB-UniRule"/>
</dbReference>
<dbReference type="CDD" id="cd01080">
    <property type="entry name" value="NAD_bind_m-THF_DH_Cyclohyd"/>
    <property type="match status" value="1"/>
</dbReference>
<dbReference type="FunFam" id="3.40.50.720:FF:000006">
    <property type="entry name" value="Bifunctional protein FolD"/>
    <property type="match status" value="1"/>
</dbReference>
<dbReference type="FunFam" id="3.40.50.10860:FF:000005">
    <property type="entry name" value="C-1-tetrahydrofolate synthase, cytoplasmic, putative"/>
    <property type="match status" value="1"/>
</dbReference>
<dbReference type="Gene3D" id="3.40.50.10860">
    <property type="entry name" value="Leucine Dehydrogenase, chain A, domain 1"/>
    <property type="match status" value="1"/>
</dbReference>
<dbReference type="Gene3D" id="3.40.50.720">
    <property type="entry name" value="NAD(P)-binding Rossmann-like Domain"/>
    <property type="match status" value="1"/>
</dbReference>
<dbReference type="HAMAP" id="MF_01576">
    <property type="entry name" value="THF_DHG_CYH"/>
    <property type="match status" value="1"/>
</dbReference>
<dbReference type="InterPro" id="IPR046346">
    <property type="entry name" value="Aminoacid_DH-like_N_sf"/>
</dbReference>
<dbReference type="InterPro" id="IPR036291">
    <property type="entry name" value="NAD(P)-bd_dom_sf"/>
</dbReference>
<dbReference type="InterPro" id="IPR000672">
    <property type="entry name" value="THF_DH/CycHdrlase"/>
</dbReference>
<dbReference type="InterPro" id="IPR020630">
    <property type="entry name" value="THF_DH/CycHdrlase_cat_dom"/>
</dbReference>
<dbReference type="InterPro" id="IPR020867">
    <property type="entry name" value="THF_DH/CycHdrlase_CS"/>
</dbReference>
<dbReference type="InterPro" id="IPR020631">
    <property type="entry name" value="THF_DH/CycHdrlase_NAD-bd_dom"/>
</dbReference>
<dbReference type="NCBIfam" id="NF010783">
    <property type="entry name" value="PRK14186.1"/>
    <property type="match status" value="1"/>
</dbReference>
<dbReference type="PANTHER" id="PTHR48099:SF5">
    <property type="entry name" value="C-1-TETRAHYDROFOLATE SYNTHASE, CYTOPLASMIC"/>
    <property type="match status" value="1"/>
</dbReference>
<dbReference type="PANTHER" id="PTHR48099">
    <property type="entry name" value="C-1-TETRAHYDROFOLATE SYNTHASE, CYTOPLASMIC-RELATED"/>
    <property type="match status" value="1"/>
</dbReference>
<dbReference type="Pfam" id="PF00763">
    <property type="entry name" value="THF_DHG_CYH"/>
    <property type="match status" value="1"/>
</dbReference>
<dbReference type="Pfam" id="PF02882">
    <property type="entry name" value="THF_DHG_CYH_C"/>
    <property type="match status" value="1"/>
</dbReference>
<dbReference type="PRINTS" id="PR00085">
    <property type="entry name" value="THFDHDRGNASE"/>
</dbReference>
<dbReference type="SUPFAM" id="SSF53223">
    <property type="entry name" value="Aminoacid dehydrogenase-like, N-terminal domain"/>
    <property type="match status" value="1"/>
</dbReference>
<dbReference type="SUPFAM" id="SSF51735">
    <property type="entry name" value="NAD(P)-binding Rossmann-fold domains"/>
    <property type="match status" value="1"/>
</dbReference>
<dbReference type="PROSITE" id="PS00767">
    <property type="entry name" value="THF_DHG_CYH_2"/>
    <property type="match status" value="1"/>
</dbReference>
<reference key="1">
    <citation type="journal article" date="2007" name="PLoS Genet.">
        <title>Patterns and implications of gene gain and loss in the evolution of Prochlorococcus.</title>
        <authorList>
            <person name="Kettler G.C."/>
            <person name="Martiny A.C."/>
            <person name="Huang K."/>
            <person name="Zucker J."/>
            <person name="Coleman M.L."/>
            <person name="Rodrigue S."/>
            <person name="Chen F."/>
            <person name="Lapidus A."/>
            <person name="Ferriera S."/>
            <person name="Johnson J."/>
            <person name="Steglich C."/>
            <person name="Church G.M."/>
            <person name="Richardson P."/>
            <person name="Chisholm S.W."/>
        </authorList>
    </citation>
    <scope>NUCLEOTIDE SEQUENCE [LARGE SCALE GENOMIC DNA]</scope>
    <source>
        <strain>MIT 9515</strain>
    </source>
</reference>
<organism>
    <name type="scientific">Prochlorococcus marinus (strain MIT 9515)</name>
    <dbReference type="NCBI Taxonomy" id="167542"/>
    <lineage>
        <taxon>Bacteria</taxon>
        <taxon>Bacillati</taxon>
        <taxon>Cyanobacteriota</taxon>
        <taxon>Cyanophyceae</taxon>
        <taxon>Synechococcales</taxon>
        <taxon>Prochlorococcaceae</taxon>
        <taxon>Prochlorococcus</taxon>
    </lineage>
</organism>
<feature type="chain" id="PRO_0000305864" description="Bifunctional protein FolD">
    <location>
        <begin position="1"/>
        <end position="298"/>
    </location>
</feature>
<feature type="binding site" evidence="1">
    <location>
        <begin position="165"/>
        <end position="167"/>
    </location>
    <ligand>
        <name>NADP(+)</name>
        <dbReference type="ChEBI" id="CHEBI:58349"/>
    </ligand>
</feature>
<feature type="binding site" evidence="1">
    <location>
        <position position="190"/>
    </location>
    <ligand>
        <name>NADP(+)</name>
        <dbReference type="ChEBI" id="CHEBI:58349"/>
    </ligand>
</feature>
<feature type="binding site" evidence="1">
    <location>
        <position position="231"/>
    </location>
    <ligand>
        <name>NADP(+)</name>
        <dbReference type="ChEBI" id="CHEBI:58349"/>
    </ligand>
</feature>
<sequence>MSLKLDGKKLSLEIEEKLKKDIESNINSTKRPPGLAVIRIGEDPASGVYVKNKERACARVGIKSFIFHLKDTIDQKEVEQLINKLNLDNDIDGMLLQLPIPDKFDEQRLISLINPDKDVDGLNEKNIGKLVKNEPGMRSCTPAGIVNLLRSQNITIEGKKIVVVGRSLLVGKPLSLMLLNLNGTVTITHSKTINLKKICKEADILIAAAGKPNLINSSYVKDGAVIIDVGIHRLTSSDKSQTKLCGDVLLEDVIPKVYAYTPVPGGVGPMTVTMLLVNTIFSWQKQFVLLSRLSDLLP</sequence>
<proteinExistence type="inferred from homology"/>
<evidence type="ECO:0000255" key="1">
    <source>
        <dbReference type="HAMAP-Rule" id="MF_01576"/>
    </source>
</evidence>
<name>FOLD_PROM5</name>
<comment type="function">
    <text evidence="1">Catalyzes the oxidation of 5,10-methylenetetrahydrofolate to 5,10-methenyltetrahydrofolate and then the hydrolysis of 5,10-methenyltetrahydrofolate to 10-formyltetrahydrofolate.</text>
</comment>
<comment type="catalytic activity">
    <reaction evidence="1">
        <text>(6R)-5,10-methylene-5,6,7,8-tetrahydrofolate + NADP(+) = (6R)-5,10-methenyltetrahydrofolate + NADPH</text>
        <dbReference type="Rhea" id="RHEA:22812"/>
        <dbReference type="ChEBI" id="CHEBI:15636"/>
        <dbReference type="ChEBI" id="CHEBI:57455"/>
        <dbReference type="ChEBI" id="CHEBI:57783"/>
        <dbReference type="ChEBI" id="CHEBI:58349"/>
        <dbReference type="EC" id="1.5.1.5"/>
    </reaction>
</comment>
<comment type="catalytic activity">
    <reaction evidence="1">
        <text>(6R)-5,10-methenyltetrahydrofolate + H2O = (6R)-10-formyltetrahydrofolate + H(+)</text>
        <dbReference type="Rhea" id="RHEA:23700"/>
        <dbReference type="ChEBI" id="CHEBI:15377"/>
        <dbReference type="ChEBI" id="CHEBI:15378"/>
        <dbReference type="ChEBI" id="CHEBI:57455"/>
        <dbReference type="ChEBI" id="CHEBI:195366"/>
        <dbReference type="EC" id="3.5.4.9"/>
    </reaction>
</comment>
<comment type="pathway">
    <text evidence="1">One-carbon metabolism; tetrahydrofolate interconversion.</text>
</comment>
<comment type="subunit">
    <text evidence="1">Homodimer.</text>
</comment>
<comment type="similarity">
    <text evidence="1">Belongs to the tetrahydrofolate dehydrogenase/cyclohydrolase family.</text>
</comment>
<gene>
    <name evidence="1" type="primary">folD</name>
    <name type="ordered locus">P9515_11591</name>
</gene>
<accession>A2BX55</accession>
<protein>
    <recommendedName>
        <fullName evidence="1">Bifunctional protein FolD</fullName>
    </recommendedName>
    <domain>
        <recommendedName>
            <fullName evidence="1">Methylenetetrahydrofolate dehydrogenase</fullName>
            <ecNumber evidence="1">1.5.1.5</ecNumber>
        </recommendedName>
    </domain>
    <domain>
        <recommendedName>
            <fullName evidence="1">Methenyltetrahydrofolate cyclohydrolase</fullName>
            <ecNumber evidence="1">3.5.4.9</ecNumber>
        </recommendedName>
    </domain>
</protein>
<keyword id="KW-0028">Amino-acid biosynthesis</keyword>
<keyword id="KW-0368">Histidine biosynthesis</keyword>
<keyword id="KW-0378">Hydrolase</keyword>
<keyword id="KW-0486">Methionine biosynthesis</keyword>
<keyword id="KW-0511">Multifunctional enzyme</keyword>
<keyword id="KW-0521">NADP</keyword>
<keyword id="KW-0554">One-carbon metabolism</keyword>
<keyword id="KW-0560">Oxidoreductase</keyword>
<keyword id="KW-0658">Purine biosynthesis</keyword>